<keyword id="KW-0067">ATP-binding</keyword>
<keyword id="KW-0375">Hydrogen ion transport</keyword>
<keyword id="KW-0406">Ion transport</keyword>
<keyword id="KW-0547">Nucleotide-binding</keyword>
<keyword id="KW-1278">Translocase</keyword>
<keyword id="KW-0813">Transport</keyword>
<evidence type="ECO:0000255" key="1"/>
<evidence type="ECO:0000305" key="2"/>
<organism>
    <name type="scientific">Beta vulgaris</name>
    <name type="common">Sugar beet</name>
    <dbReference type="NCBI Taxonomy" id="161934"/>
    <lineage>
        <taxon>Eukaryota</taxon>
        <taxon>Viridiplantae</taxon>
        <taxon>Streptophyta</taxon>
        <taxon>Embryophyta</taxon>
        <taxon>Tracheophyta</taxon>
        <taxon>Spermatophyta</taxon>
        <taxon>Magnoliopsida</taxon>
        <taxon>eudicotyledons</taxon>
        <taxon>Gunneridae</taxon>
        <taxon>Pentapetalae</taxon>
        <taxon>Caryophyllales</taxon>
        <taxon>Chenopodiaceae</taxon>
        <taxon>Betoideae</taxon>
        <taxon>Beta</taxon>
    </lineage>
</organism>
<protein>
    <recommendedName>
        <fullName>V-type proton ATPase catalytic subunit A</fullName>
        <shortName>V-ATPase subunit A</shortName>
        <ecNumber>7.1.2.2</ecNumber>
    </recommendedName>
    <alternativeName>
        <fullName>V-ATPase 69 kDa subunit</fullName>
    </alternativeName>
    <alternativeName>
        <fullName>Vacuolar proton pump subunit alpha</fullName>
    </alternativeName>
</protein>
<comment type="function">
    <text>Catalytic subunit of the peripheral V1 complex of vacuolar ATPase. V-ATPase vacuolar ATPase is responsible for acidifying a variety of intracellular compartments in eukaryotic cells.</text>
</comment>
<comment type="catalytic activity">
    <reaction>
        <text>ATP + H2O + 4 H(+)(in) = ADP + phosphate + 5 H(+)(out)</text>
        <dbReference type="Rhea" id="RHEA:57720"/>
        <dbReference type="ChEBI" id="CHEBI:15377"/>
        <dbReference type="ChEBI" id="CHEBI:15378"/>
        <dbReference type="ChEBI" id="CHEBI:30616"/>
        <dbReference type="ChEBI" id="CHEBI:43474"/>
        <dbReference type="ChEBI" id="CHEBI:456216"/>
        <dbReference type="EC" id="7.1.2.2"/>
    </reaction>
</comment>
<comment type="subunit">
    <text>V-ATPase is a heteromultimeric enzyme composed of a peripheral catalytic V1 complex (main components: subunits A, B, C, D, E, and F) attached to an integral membrane V0 proton pore complex (main component: the proteolipid protein).</text>
</comment>
<comment type="similarity">
    <text evidence="2">Belongs to the ATPase alpha/beta chains family.</text>
</comment>
<reference key="1">
    <citation type="submission" date="1996-07" db="EMBL/GenBank/DDBJ databases">
        <authorList>
            <person name="Kirsch M."/>
        </authorList>
    </citation>
    <scope>NUCLEOTIDE SEQUENCE [MRNA]</scope>
</reference>
<sequence length="623" mass="68548">MPAVYGDRMTTFEDSEKESEYGYIRKVSGPVVVADGMNGAAMYELVRVGHDNLIGEIIRLEGDSATIQVYEETGGLTVNDPVLRTHKPLSVELGPGILGNIFDGIQRPLKTIAKRSGDVYIPRGVSVPPLDKDTQWDFQPKKLGVGDLLTGGDLYAIVDENSLMQHHVVLPPDAMGKITYIAPAGNYTIQDTVLELEFQGVVKKFTMLQTWPVRTPRPVASKLAADTPLLTGQRVLDALFPSVLGGTCAILGAFGCGKTVISQALSKYSNSDAVVYVGCGERGNEMAEVLMDFPQLTMTLPDGREESVMKRTTLVANTSNMPVAAREASIYTGITIAEYFRDMGYNVSMMADSGSRWAEALREISGRLAEMPADSGYPAYLAARLASFYEAAGKVKCLGGPERNGSVTIVGAVSPPGGDFSDPVTSATLSIVQVFWGLDKKLAQRKHFPSVNWLISYSKYSGALESFYEKFDSEFIDIRTKAREVLQREDDLNEIVQLVGKDALAETDKITLDTAKLLREDYLAQNAFTAYDKFCPFYKSVWMMRNIIHFYNLANQAVERGAGSDGQKITYSLIKLRLGDLFYRLVSQKFEDPAEGEDALVAKFKKLNEDLTAAFRNLEDETR</sequence>
<proteinExistence type="evidence at transcript level"/>
<name>VATA_BETVU</name>
<accession>Q39442</accession>
<feature type="chain" id="PRO_0000144575" description="V-type proton ATPase catalytic subunit A">
    <location>
        <begin position="1"/>
        <end position="623"/>
    </location>
</feature>
<feature type="binding site" evidence="1">
    <location>
        <begin position="252"/>
        <end position="259"/>
    </location>
    <ligand>
        <name>ATP</name>
        <dbReference type="ChEBI" id="CHEBI:30616"/>
    </ligand>
</feature>
<dbReference type="EC" id="7.1.2.2"/>
<dbReference type="EMBL" id="X98767">
    <property type="protein sequence ID" value="CAA67305.1"/>
    <property type="molecule type" value="mRNA"/>
</dbReference>
<dbReference type="RefSeq" id="NP_001290002.1">
    <property type="nucleotide sequence ID" value="NM_001303073.1"/>
</dbReference>
<dbReference type="SMR" id="Q39442"/>
<dbReference type="GeneID" id="104906090"/>
<dbReference type="KEGG" id="bvg:104906090"/>
<dbReference type="GO" id="GO:0000325">
    <property type="term" value="C:plant-type vacuole"/>
    <property type="evidence" value="ECO:0007669"/>
    <property type="project" value="TreeGrafter"/>
</dbReference>
<dbReference type="GO" id="GO:0033180">
    <property type="term" value="C:proton-transporting V-type ATPase, V1 domain"/>
    <property type="evidence" value="ECO:0007669"/>
    <property type="project" value="InterPro"/>
</dbReference>
<dbReference type="GO" id="GO:0005524">
    <property type="term" value="F:ATP binding"/>
    <property type="evidence" value="ECO:0007669"/>
    <property type="project" value="UniProtKB-KW"/>
</dbReference>
<dbReference type="GO" id="GO:0016887">
    <property type="term" value="F:ATP hydrolysis activity"/>
    <property type="evidence" value="ECO:0007669"/>
    <property type="project" value="InterPro"/>
</dbReference>
<dbReference type="GO" id="GO:0046961">
    <property type="term" value="F:proton-transporting ATPase activity, rotational mechanism"/>
    <property type="evidence" value="ECO:0007669"/>
    <property type="project" value="InterPro"/>
</dbReference>
<dbReference type="GO" id="GO:0046034">
    <property type="term" value="P:ATP metabolic process"/>
    <property type="evidence" value="ECO:0007669"/>
    <property type="project" value="InterPro"/>
</dbReference>
<dbReference type="CDD" id="cd18111">
    <property type="entry name" value="ATP-synt_V_A-type_alpha_C"/>
    <property type="match status" value="1"/>
</dbReference>
<dbReference type="CDD" id="cd18119">
    <property type="entry name" value="ATP-synt_V_A-type_alpha_N"/>
    <property type="match status" value="1"/>
</dbReference>
<dbReference type="CDD" id="cd01134">
    <property type="entry name" value="V_A-ATPase_A"/>
    <property type="match status" value="1"/>
</dbReference>
<dbReference type="FunFam" id="1.10.1140.10:FF:000002">
    <property type="entry name" value="V-type proton ATPase catalytic subunit A"/>
    <property type="match status" value="1"/>
</dbReference>
<dbReference type="FunFam" id="2.40.30.20:FF:000002">
    <property type="entry name" value="V-type proton ATPase catalytic subunit A"/>
    <property type="match status" value="1"/>
</dbReference>
<dbReference type="FunFam" id="2.40.50.100:FF:000008">
    <property type="entry name" value="V-type proton ATPase catalytic subunit A"/>
    <property type="match status" value="1"/>
</dbReference>
<dbReference type="FunFam" id="3.40.50.300:FF:000052">
    <property type="entry name" value="V-type proton ATPase catalytic subunit A"/>
    <property type="match status" value="1"/>
</dbReference>
<dbReference type="Gene3D" id="2.40.30.20">
    <property type="match status" value="1"/>
</dbReference>
<dbReference type="Gene3D" id="2.40.50.100">
    <property type="match status" value="1"/>
</dbReference>
<dbReference type="Gene3D" id="1.10.1140.10">
    <property type="entry name" value="Bovine Mitochondrial F1-atpase, Atp Synthase Beta Chain, Chain D, domain 3"/>
    <property type="match status" value="1"/>
</dbReference>
<dbReference type="Gene3D" id="3.40.50.300">
    <property type="entry name" value="P-loop containing nucleotide triphosphate hydrolases"/>
    <property type="match status" value="1"/>
</dbReference>
<dbReference type="HAMAP" id="MF_00309">
    <property type="entry name" value="ATP_synth_A_arch"/>
    <property type="match status" value="1"/>
</dbReference>
<dbReference type="InterPro" id="IPR055190">
    <property type="entry name" value="ATP-synt_VA_C"/>
</dbReference>
<dbReference type="InterPro" id="IPR031686">
    <property type="entry name" value="ATP-synth_a_Xtn"/>
</dbReference>
<dbReference type="InterPro" id="IPR023366">
    <property type="entry name" value="ATP_synth_asu-like_sf"/>
</dbReference>
<dbReference type="InterPro" id="IPR020003">
    <property type="entry name" value="ATPase_a/bsu_AS"/>
</dbReference>
<dbReference type="InterPro" id="IPR004100">
    <property type="entry name" value="ATPase_F1/V1/A1_a/bsu_N"/>
</dbReference>
<dbReference type="InterPro" id="IPR036121">
    <property type="entry name" value="ATPase_F1/V1/A1_a/bsu_N_sf"/>
</dbReference>
<dbReference type="InterPro" id="IPR000194">
    <property type="entry name" value="ATPase_F1/V1/A1_a/bsu_nucl-bd"/>
</dbReference>
<dbReference type="InterPro" id="IPR024034">
    <property type="entry name" value="ATPase_F1/V1_b/a_C"/>
</dbReference>
<dbReference type="InterPro" id="IPR005725">
    <property type="entry name" value="ATPase_V1-cplx_asu"/>
</dbReference>
<dbReference type="InterPro" id="IPR027417">
    <property type="entry name" value="P-loop_NTPase"/>
</dbReference>
<dbReference type="InterPro" id="IPR022878">
    <property type="entry name" value="V-ATPase_asu"/>
</dbReference>
<dbReference type="NCBIfam" id="NF003220">
    <property type="entry name" value="PRK04192.1"/>
    <property type="match status" value="1"/>
</dbReference>
<dbReference type="NCBIfam" id="TIGR01042">
    <property type="entry name" value="V-ATPase_V1_A"/>
    <property type="match status" value="1"/>
</dbReference>
<dbReference type="PANTHER" id="PTHR43607:SF1">
    <property type="entry name" value="H(+)-TRANSPORTING TWO-SECTOR ATPASE"/>
    <property type="match status" value="1"/>
</dbReference>
<dbReference type="PANTHER" id="PTHR43607">
    <property type="entry name" value="V-TYPE PROTON ATPASE CATALYTIC SUBUNIT A"/>
    <property type="match status" value="1"/>
</dbReference>
<dbReference type="Pfam" id="PF00006">
    <property type="entry name" value="ATP-synt_ab"/>
    <property type="match status" value="1"/>
</dbReference>
<dbReference type="Pfam" id="PF02874">
    <property type="entry name" value="ATP-synt_ab_N"/>
    <property type="match status" value="1"/>
</dbReference>
<dbReference type="Pfam" id="PF16886">
    <property type="entry name" value="ATP-synt_ab_Xtn"/>
    <property type="match status" value="1"/>
</dbReference>
<dbReference type="Pfam" id="PF22919">
    <property type="entry name" value="ATP-synt_VA_C"/>
    <property type="match status" value="1"/>
</dbReference>
<dbReference type="SUPFAM" id="SSF47917">
    <property type="entry name" value="C-terminal domain of alpha and beta subunits of F1 ATP synthase"/>
    <property type="match status" value="1"/>
</dbReference>
<dbReference type="SUPFAM" id="SSF50615">
    <property type="entry name" value="N-terminal domain of alpha and beta subunits of F1 ATP synthase"/>
    <property type="match status" value="1"/>
</dbReference>
<dbReference type="SUPFAM" id="SSF52540">
    <property type="entry name" value="P-loop containing nucleoside triphosphate hydrolases"/>
    <property type="match status" value="1"/>
</dbReference>
<dbReference type="PROSITE" id="PS00152">
    <property type="entry name" value="ATPASE_ALPHA_BETA"/>
    <property type="match status" value="1"/>
</dbReference>